<feature type="chain" id="PRO_1000133261" description="Isocitrate dehydrogenase kinase/phosphatase">
    <location>
        <begin position="1"/>
        <end position="602"/>
    </location>
</feature>
<feature type="active site" evidence="1">
    <location>
        <position position="383"/>
    </location>
</feature>
<feature type="binding site" evidence="1">
    <location>
        <begin position="327"/>
        <end position="333"/>
    </location>
    <ligand>
        <name>ATP</name>
        <dbReference type="ChEBI" id="CHEBI:30616"/>
    </ligand>
</feature>
<feature type="binding site" evidence="1">
    <location>
        <position position="348"/>
    </location>
    <ligand>
        <name>ATP</name>
        <dbReference type="ChEBI" id="CHEBI:30616"/>
    </ligand>
</feature>
<comment type="function">
    <text evidence="1">Bifunctional enzyme which can phosphorylate or dephosphorylate isocitrate dehydrogenase (IDH) on a specific serine residue. This is a regulatory mechanism which enables bacteria to bypass the Krebs cycle via the glyoxylate shunt in response to the source of carbon. When bacteria are grown on glucose, IDH is fully active and unphosphorylated, but when grown on acetate or ethanol, the activity of IDH declines drastically concomitant with its phosphorylation.</text>
</comment>
<comment type="catalytic activity">
    <reaction evidence="1">
        <text>L-seryl-[isocitrate dehydrogenase] + ATP = O-phospho-L-seryl-[isocitrate dehydrogenase] + ADP + H(+)</text>
        <dbReference type="Rhea" id="RHEA:43540"/>
        <dbReference type="Rhea" id="RHEA-COMP:10605"/>
        <dbReference type="Rhea" id="RHEA-COMP:10606"/>
        <dbReference type="ChEBI" id="CHEBI:15378"/>
        <dbReference type="ChEBI" id="CHEBI:29999"/>
        <dbReference type="ChEBI" id="CHEBI:30616"/>
        <dbReference type="ChEBI" id="CHEBI:83421"/>
        <dbReference type="ChEBI" id="CHEBI:456216"/>
        <dbReference type="EC" id="2.7.11.5"/>
    </reaction>
</comment>
<comment type="subcellular location">
    <subcellularLocation>
        <location evidence="1">Cytoplasm</location>
    </subcellularLocation>
</comment>
<comment type="similarity">
    <text evidence="1">Belongs to the AceK family.</text>
</comment>
<name>ACEK_PARP8</name>
<organism>
    <name type="scientific">Paraburkholderia phymatum (strain DSM 17167 / CIP 108236 / LMG 21445 / STM815)</name>
    <name type="common">Burkholderia phymatum</name>
    <dbReference type="NCBI Taxonomy" id="391038"/>
    <lineage>
        <taxon>Bacteria</taxon>
        <taxon>Pseudomonadati</taxon>
        <taxon>Pseudomonadota</taxon>
        <taxon>Betaproteobacteria</taxon>
        <taxon>Burkholderiales</taxon>
        <taxon>Burkholderiaceae</taxon>
        <taxon>Paraburkholderia</taxon>
    </lineage>
</organism>
<keyword id="KW-0067">ATP-binding</keyword>
<keyword id="KW-0963">Cytoplasm</keyword>
<keyword id="KW-0329">Glyoxylate bypass</keyword>
<keyword id="KW-0378">Hydrolase</keyword>
<keyword id="KW-0418">Kinase</keyword>
<keyword id="KW-0547">Nucleotide-binding</keyword>
<keyword id="KW-0904">Protein phosphatase</keyword>
<keyword id="KW-1185">Reference proteome</keyword>
<keyword id="KW-0723">Serine/threonine-protein kinase</keyword>
<keyword id="KW-0808">Transferase</keyword>
<keyword id="KW-0816">Tricarboxylic acid cycle</keyword>
<evidence type="ECO:0000255" key="1">
    <source>
        <dbReference type="HAMAP-Rule" id="MF_00747"/>
    </source>
</evidence>
<gene>
    <name evidence="1" type="primary">aceK</name>
    <name type="ordered locus">Bphy_0180</name>
</gene>
<protein>
    <recommendedName>
        <fullName evidence="1">Isocitrate dehydrogenase kinase/phosphatase</fullName>
        <shortName evidence="1">IDH kinase/phosphatase</shortName>
        <shortName evidence="1">IDHK/P</shortName>
        <ecNumber evidence="1">2.7.11.5</ecNumber>
        <ecNumber evidence="1">3.1.3.-</ecNumber>
    </recommendedName>
</protein>
<reference key="1">
    <citation type="journal article" date="2014" name="Stand. Genomic Sci.">
        <title>Complete genome sequence of Burkholderia phymatum STM815(T), a broad host range and efficient nitrogen-fixing symbiont of Mimosa species.</title>
        <authorList>
            <person name="Moulin L."/>
            <person name="Klonowska A."/>
            <person name="Caroline B."/>
            <person name="Booth K."/>
            <person name="Vriezen J.A."/>
            <person name="Melkonian R."/>
            <person name="James E.K."/>
            <person name="Young J.P."/>
            <person name="Bena G."/>
            <person name="Hauser L."/>
            <person name="Land M."/>
            <person name="Kyrpides N."/>
            <person name="Bruce D."/>
            <person name="Chain P."/>
            <person name="Copeland A."/>
            <person name="Pitluck S."/>
            <person name="Woyke T."/>
            <person name="Lizotte-Waniewski M."/>
            <person name="Bristow J."/>
            <person name="Riley M."/>
        </authorList>
    </citation>
    <scope>NUCLEOTIDE SEQUENCE [LARGE SCALE GENOMIC DNA]</scope>
    <source>
        <strain>DSM 17167 / CIP 108236 / LMG 21445 / STM815</strain>
    </source>
</reference>
<sequence length="602" mass="69768">MNHFPKLLSSQIGFDVAETLLAGFDRHYCIFREAAIRAKNLFEAADWHGLQKLARERITSYDERVRECIAKLEDEYDAENIDDDVWQQIKLHYIGLLTTHRQPECAETFFNSVCCHILHRSYFNNDFIFVRPAISTEYIENDEPAAKPTYRAYYPGKDGLAVTLERIVTNFQLNPPFENLTRDVQCVIQALRDNFGTFNEAPNFQIHVLSSLFFRNKAAYIIGRIINGDMMLPFALPVHHVKPGLLALDALLCKRDQLLIIFSFAHSYFLVDMEVPSAYVEFLGSILHGKPKAEIYTSVGLQKQGKNLFYRDLLRHLKHSSDRFIIAPGIKGMVMLVFTLPSFPYVFKLIKDAFPPPKETTREQVVGKYQLVKRHDRLGRMADTLEYSSVALPLSRLDDALIRELEKEAPSMLEYEGDNLVIRHVYIERRMVPLNIFLQNGTDADIEHGIREYGNAVKELMQANIFPGDMLYKNFGVTRHGRVVFYDYDEIEYLTDCNVRAVPPPRNEEDEMSGEPWYSVGPHDIFPETYNTFLLGDPRVRESFLKHHADFFDPALWQKQKDYILRGELPDFYPYDRSLRFSIRYPERFAADHVTAATERAA</sequence>
<accession>B2JKI4</accession>
<proteinExistence type="inferred from homology"/>
<dbReference type="EC" id="2.7.11.5" evidence="1"/>
<dbReference type="EC" id="3.1.3.-" evidence="1"/>
<dbReference type="EMBL" id="CP001043">
    <property type="protein sequence ID" value="ACC69373.1"/>
    <property type="molecule type" value="Genomic_DNA"/>
</dbReference>
<dbReference type="RefSeq" id="WP_012399602.1">
    <property type="nucleotide sequence ID" value="NC_010622.1"/>
</dbReference>
<dbReference type="SMR" id="B2JKI4"/>
<dbReference type="STRING" id="391038.Bphy_0180"/>
<dbReference type="KEGG" id="bph:Bphy_0180"/>
<dbReference type="eggNOG" id="COG4579">
    <property type="taxonomic scope" value="Bacteria"/>
</dbReference>
<dbReference type="HOGENOM" id="CLU_033804_1_1_4"/>
<dbReference type="OrthoDB" id="5287793at2"/>
<dbReference type="Proteomes" id="UP000001192">
    <property type="component" value="Chromosome 1"/>
</dbReference>
<dbReference type="GO" id="GO:0005737">
    <property type="term" value="C:cytoplasm"/>
    <property type="evidence" value="ECO:0007669"/>
    <property type="project" value="UniProtKB-SubCell"/>
</dbReference>
<dbReference type="GO" id="GO:0008772">
    <property type="term" value="F:[isocitrate dehydrogenase (NADP+)] kinase activity"/>
    <property type="evidence" value="ECO:0007669"/>
    <property type="project" value="UniProtKB-UniRule"/>
</dbReference>
<dbReference type="GO" id="GO:0016208">
    <property type="term" value="F:AMP binding"/>
    <property type="evidence" value="ECO:0007669"/>
    <property type="project" value="TreeGrafter"/>
</dbReference>
<dbReference type="GO" id="GO:0005524">
    <property type="term" value="F:ATP binding"/>
    <property type="evidence" value="ECO:0007669"/>
    <property type="project" value="UniProtKB-UniRule"/>
</dbReference>
<dbReference type="GO" id="GO:0004721">
    <property type="term" value="F:phosphoprotein phosphatase activity"/>
    <property type="evidence" value="ECO:0007669"/>
    <property type="project" value="UniProtKB-KW"/>
</dbReference>
<dbReference type="GO" id="GO:0004674">
    <property type="term" value="F:protein serine/threonine kinase activity"/>
    <property type="evidence" value="ECO:0007669"/>
    <property type="project" value="UniProtKB-KW"/>
</dbReference>
<dbReference type="GO" id="GO:0006006">
    <property type="term" value="P:glucose metabolic process"/>
    <property type="evidence" value="ECO:0007669"/>
    <property type="project" value="InterPro"/>
</dbReference>
<dbReference type="GO" id="GO:0006097">
    <property type="term" value="P:glyoxylate cycle"/>
    <property type="evidence" value="ECO:0007669"/>
    <property type="project" value="UniProtKB-UniRule"/>
</dbReference>
<dbReference type="GO" id="GO:0006099">
    <property type="term" value="P:tricarboxylic acid cycle"/>
    <property type="evidence" value="ECO:0007669"/>
    <property type="project" value="UniProtKB-UniRule"/>
</dbReference>
<dbReference type="HAMAP" id="MF_00747">
    <property type="entry name" value="AceK"/>
    <property type="match status" value="1"/>
</dbReference>
<dbReference type="InterPro" id="IPR046855">
    <property type="entry name" value="AceK_kinase"/>
</dbReference>
<dbReference type="InterPro" id="IPR046854">
    <property type="entry name" value="AceK_regulatory"/>
</dbReference>
<dbReference type="InterPro" id="IPR010452">
    <property type="entry name" value="Isocitrate_DH_AceK"/>
</dbReference>
<dbReference type="NCBIfam" id="NF002804">
    <property type="entry name" value="PRK02946.1"/>
    <property type="match status" value="1"/>
</dbReference>
<dbReference type="PANTHER" id="PTHR39559">
    <property type="match status" value="1"/>
</dbReference>
<dbReference type="PANTHER" id="PTHR39559:SF1">
    <property type="entry name" value="ISOCITRATE DEHYDROGENASE KINASE_PHOSPHATASE"/>
    <property type="match status" value="1"/>
</dbReference>
<dbReference type="Pfam" id="PF06315">
    <property type="entry name" value="AceK_kinase"/>
    <property type="match status" value="1"/>
</dbReference>
<dbReference type="Pfam" id="PF20423">
    <property type="entry name" value="AceK_regulatory"/>
    <property type="match status" value="1"/>
</dbReference>
<dbReference type="PIRSF" id="PIRSF000719">
    <property type="entry name" value="AceK"/>
    <property type="match status" value="1"/>
</dbReference>